<evidence type="ECO:0000255" key="1">
    <source>
        <dbReference type="HAMAP-Rule" id="MF_00736"/>
    </source>
</evidence>
<evidence type="ECO:0000305" key="2"/>
<gene>
    <name evidence="1" type="primary">rplK</name>
    <name type="ordered locus">CKO_03007</name>
</gene>
<feature type="chain" id="PRO_1000046165" description="Large ribosomal subunit protein uL11">
    <location>
        <begin position="1"/>
        <end position="142"/>
    </location>
</feature>
<sequence length="142" mass="14889">MAKKVQAYVKLQVAAGMANPSPPVGPALGQQGVNIMEFCKAFNAKTDSIEKGLPIPVVITVYADRSFTFITKTPPAAVLLKKAAGIKSGSGKPNKDKVGKISRAQLQEIAQTKAADMTGADIEAMTRSIEGTARSMGLVVED</sequence>
<protein>
    <recommendedName>
        <fullName evidence="1">Large ribosomal subunit protein uL11</fullName>
    </recommendedName>
    <alternativeName>
        <fullName evidence="2">50S ribosomal protein L11</fullName>
    </alternativeName>
</protein>
<proteinExistence type="inferred from homology"/>
<keyword id="KW-0488">Methylation</keyword>
<keyword id="KW-1185">Reference proteome</keyword>
<keyword id="KW-0687">Ribonucleoprotein</keyword>
<keyword id="KW-0689">Ribosomal protein</keyword>
<keyword id="KW-0694">RNA-binding</keyword>
<keyword id="KW-0699">rRNA-binding</keyword>
<name>RL11_CITK8</name>
<organism>
    <name type="scientific">Citrobacter koseri (strain ATCC BAA-895 / CDC 4225-83 / SGSC4696)</name>
    <dbReference type="NCBI Taxonomy" id="290338"/>
    <lineage>
        <taxon>Bacteria</taxon>
        <taxon>Pseudomonadati</taxon>
        <taxon>Pseudomonadota</taxon>
        <taxon>Gammaproteobacteria</taxon>
        <taxon>Enterobacterales</taxon>
        <taxon>Enterobacteriaceae</taxon>
        <taxon>Citrobacter</taxon>
    </lineage>
</organism>
<dbReference type="EMBL" id="CP000822">
    <property type="protein sequence ID" value="ABV14107.1"/>
    <property type="molecule type" value="Genomic_DNA"/>
</dbReference>
<dbReference type="RefSeq" id="WP_012133815.1">
    <property type="nucleotide sequence ID" value="NC_009792.1"/>
</dbReference>
<dbReference type="SMR" id="A8AKU4"/>
<dbReference type="STRING" id="290338.CKO_03007"/>
<dbReference type="GeneID" id="98391123"/>
<dbReference type="KEGG" id="cko:CKO_03007"/>
<dbReference type="HOGENOM" id="CLU_074237_2_0_6"/>
<dbReference type="OrthoDB" id="9802408at2"/>
<dbReference type="Proteomes" id="UP000008148">
    <property type="component" value="Chromosome"/>
</dbReference>
<dbReference type="GO" id="GO:0022625">
    <property type="term" value="C:cytosolic large ribosomal subunit"/>
    <property type="evidence" value="ECO:0007669"/>
    <property type="project" value="TreeGrafter"/>
</dbReference>
<dbReference type="GO" id="GO:0070180">
    <property type="term" value="F:large ribosomal subunit rRNA binding"/>
    <property type="evidence" value="ECO:0007669"/>
    <property type="project" value="UniProtKB-UniRule"/>
</dbReference>
<dbReference type="GO" id="GO:0003735">
    <property type="term" value="F:structural constituent of ribosome"/>
    <property type="evidence" value="ECO:0007669"/>
    <property type="project" value="InterPro"/>
</dbReference>
<dbReference type="GO" id="GO:0006412">
    <property type="term" value="P:translation"/>
    <property type="evidence" value="ECO:0007669"/>
    <property type="project" value="UniProtKB-UniRule"/>
</dbReference>
<dbReference type="CDD" id="cd00349">
    <property type="entry name" value="Ribosomal_L11"/>
    <property type="match status" value="1"/>
</dbReference>
<dbReference type="FunFam" id="1.10.10.250:FF:000001">
    <property type="entry name" value="50S ribosomal protein L11"/>
    <property type="match status" value="1"/>
</dbReference>
<dbReference type="FunFam" id="3.30.1550.10:FF:000001">
    <property type="entry name" value="50S ribosomal protein L11"/>
    <property type="match status" value="1"/>
</dbReference>
<dbReference type="Gene3D" id="1.10.10.250">
    <property type="entry name" value="Ribosomal protein L11, C-terminal domain"/>
    <property type="match status" value="1"/>
</dbReference>
<dbReference type="Gene3D" id="3.30.1550.10">
    <property type="entry name" value="Ribosomal protein L11/L12, N-terminal domain"/>
    <property type="match status" value="1"/>
</dbReference>
<dbReference type="HAMAP" id="MF_00736">
    <property type="entry name" value="Ribosomal_uL11"/>
    <property type="match status" value="1"/>
</dbReference>
<dbReference type="InterPro" id="IPR000911">
    <property type="entry name" value="Ribosomal_uL11"/>
</dbReference>
<dbReference type="InterPro" id="IPR006519">
    <property type="entry name" value="Ribosomal_uL11_bac-typ"/>
</dbReference>
<dbReference type="InterPro" id="IPR020783">
    <property type="entry name" value="Ribosomal_uL11_C"/>
</dbReference>
<dbReference type="InterPro" id="IPR036769">
    <property type="entry name" value="Ribosomal_uL11_C_sf"/>
</dbReference>
<dbReference type="InterPro" id="IPR020785">
    <property type="entry name" value="Ribosomal_uL11_CS"/>
</dbReference>
<dbReference type="InterPro" id="IPR020784">
    <property type="entry name" value="Ribosomal_uL11_N"/>
</dbReference>
<dbReference type="InterPro" id="IPR036796">
    <property type="entry name" value="Ribosomal_uL11_N_sf"/>
</dbReference>
<dbReference type="NCBIfam" id="TIGR01632">
    <property type="entry name" value="L11_bact"/>
    <property type="match status" value="1"/>
</dbReference>
<dbReference type="PANTHER" id="PTHR11661">
    <property type="entry name" value="60S RIBOSOMAL PROTEIN L12"/>
    <property type="match status" value="1"/>
</dbReference>
<dbReference type="PANTHER" id="PTHR11661:SF1">
    <property type="entry name" value="LARGE RIBOSOMAL SUBUNIT PROTEIN UL11M"/>
    <property type="match status" value="1"/>
</dbReference>
<dbReference type="Pfam" id="PF00298">
    <property type="entry name" value="Ribosomal_L11"/>
    <property type="match status" value="1"/>
</dbReference>
<dbReference type="Pfam" id="PF03946">
    <property type="entry name" value="Ribosomal_L11_N"/>
    <property type="match status" value="1"/>
</dbReference>
<dbReference type="SMART" id="SM00649">
    <property type="entry name" value="RL11"/>
    <property type="match status" value="1"/>
</dbReference>
<dbReference type="SUPFAM" id="SSF54747">
    <property type="entry name" value="Ribosomal L11/L12e N-terminal domain"/>
    <property type="match status" value="1"/>
</dbReference>
<dbReference type="SUPFAM" id="SSF46906">
    <property type="entry name" value="Ribosomal protein L11, C-terminal domain"/>
    <property type="match status" value="1"/>
</dbReference>
<dbReference type="PROSITE" id="PS00359">
    <property type="entry name" value="RIBOSOMAL_L11"/>
    <property type="match status" value="1"/>
</dbReference>
<reference key="1">
    <citation type="submission" date="2007-08" db="EMBL/GenBank/DDBJ databases">
        <authorList>
            <consortium name="The Citrobacter koseri Genome Sequencing Project"/>
            <person name="McClelland M."/>
            <person name="Sanderson E.K."/>
            <person name="Porwollik S."/>
            <person name="Spieth J."/>
            <person name="Clifton W.S."/>
            <person name="Latreille P."/>
            <person name="Courtney L."/>
            <person name="Wang C."/>
            <person name="Pepin K."/>
            <person name="Bhonagiri V."/>
            <person name="Nash W."/>
            <person name="Johnson M."/>
            <person name="Thiruvilangam P."/>
            <person name="Wilson R."/>
        </authorList>
    </citation>
    <scope>NUCLEOTIDE SEQUENCE [LARGE SCALE GENOMIC DNA]</scope>
    <source>
        <strain>ATCC BAA-895 / CDC 4225-83 / SGSC4696</strain>
    </source>
</reference>
<accession>A8AKU4</accession>
<comment type="function">
    <text evidence="1">Forms part of the ribosomal stalk which helps the ribosome interact with GTP-bound translation factors.</text>
</comment>
<comment type="subunit">
    <text evidence="1">Part of the ribosomal stalk of the 50S ribosomal subunit. Interacts with L10 and the large rRNA to form the base of the stalk. L10 forms an elongated spine to which L12 dimers bind in a sequential fashion forming a multimeric L10(L12)X complex.</text>
</comment>
<comment type="PTM">
    <text evidence="1">One or more lysine residues are methylated.</text>
</comment>
<comment type="similarity">
    <text evidence="1">Belongs to the universal ribosomal protein uL11 family.</text>
</comment>